<sequence length="383" mass="42215">MLYQIFYPLRESFFGFNLFRYITFRTAGAVATALILVILFAPGVIEKLKKLHFGQVVRDDGPETHLVKTGTPTMGGIFIVGSILISVLLWAELDNLKIILLTLSLVILSIAGFLDDFLKIKYKNSKGLPGIYKIFFQTFVGIIIGVYLYYFDKSTFLMTFELNQGIGVLEAVKVAQVPSSTIFLPFASTIYIDLKILYIPFATFVVVSMSNAVNLTDGLDGLAIGLLIIMSMALAVLSYVSGNSLIATYLKIPFISDAGEVTVFVGALIGAGLGFLWFNAHPAQVFMGDVGSLSLGGVLGIIALFIKHELLLVIIGAVYVAEALSVVLQVFSYKFFNKKRIFKMAPLHHHFEKSGWKETQVVFRFYIIGIIMALIGIATLKIR</sequence>
<feature type="chain" id="PRO_1000117166" description="Phospho-N-acetylmuramoyl-pentapeptide-transferase">
    <location>
        <begin position="1"/>
        <end position="383"/>
    </location>
</feature>
<feature type="transmembrane region" description="Helical" evidence="1">
    <location>
        <begin position="26"/>
        <end position="46"/>
    </location>
</feature>
<feature type="transmembrane region" description="Helical" evidence="1">
    <location>
        <begin position="73"/>
        <end position="93"/>
    </location>
</feature>
<feature type="transmembrane region" description="Helical" evidence="1">
    <location>
        <begin position="98"/>
        <end position="118"/>
    </location>
</feature>
<feature type="transmembrane region" description="Helical" evidence="1">
    <location>
        <begin position="131"/>
        <end position="151"/>
    </location>
</feature>
<feature type="transmembrane region" description="Helical" evidence="1">
    <location>
        <begin position="182"/>
        <end position="202"/>
    </location>
</feature>
<feature type="transmembrane region" description="Helical" evidence="1">
    <location>
        <begin position="221"/>
        <end position="241"/>
    </location>
</feature>
<feature type="transmembrane region" description="Helical" evidence="1">
    <location>
        <begin position="258"/>
        <end position="278"/>
    </location>
</feature>
<feature type="transmembrane region" description="Helical" evidence="1">
    <location>
        <begin position="283"/>
        <end position="305"/>
    </location>
</feature>
<feature type="transmembrane region" description="Helical" evidence="1">
    <location>
        <begin position="360"/>
        <end position="380"/>
    </location>
</feature>
<comment type="function">
    <text evidence="1">Catalyzes the initial step of the lipid cycle reactions in the biosynthesis of the cell wall peptidoglycan: transfers peptidoglycan precursor phospho-MurNAc-pentapeptide from UDP-MurNAc-pentapeptide onto the lipid carrier undecaprenyl phosphate, yielding undecaprenyl-pyrophosphoryl-MurNAc-pentapeptide, known as lipid I.</text>
</comment>
<comment type="catalytic activity">
    <reaction evidence="1">
        <text>UDP-N-acetyl-alpha-D-muramoyl-L-alanyl-gamma-D-glutamyl-meso-2,6-diaminopimeloyl-D-alanyl-D-alanine + di-trans,octa-cis-undecaprenyl phosphate = di-trans,octa-cis-undecaprenyl diphospho-N-acetyl-alpha-D-muramoyl-L-alanyl-D-glutamyl-meso-2,6-diaminopimeloyl-D-alanyl-D-alanine + UMP</text>
        <dbReference type="Rhea" id="RHEA:28386"/>
        <dbReference type="ChEBI" id="CHEBI:57865"/>
        <dbReference type="ChEBI" id="CHEBI:60392"/>
        <dbReference type="ChEBI" id="CHEBI:61386"/>
        <dbReference type="ChEBI" id="CHEBI:61387"/>
        <dbReference type="EC" id="2.7.8.13"/>
    </reaction>
</comment>
<comment type="cofactor">
    <cofactor evidence="1">
        <name>Mg(2+)</name>
        <dbReference type="ChEBI" id="CHEBI:18420"/>
    </cofactor>
</comment>
<comment type="pathway">
    <text evidence="1">Cell wall biogenesis; peptidoglycan biosynthesis.</text>
</comment>
<comment type="subcellular location">
    <subcellularLocation>
        <location evidence="1">Cell inner membrane</location>
        <topology evidence="1">Multi-pass membrane protein</topology>
    </subcellularLocation>
</comment>
<comment type="similarity">
    <text evidence="1">Belongs to the glycosyltransferase 4 family. MraY subfamily.</text>
</comment>
<reference key="1">
    <citation type="journal article" date="2009" name="PLoS ONE">
        <title>Genome sequence of the pathogenic intestinal spirochete Brachyspira hyodysenteriae reveals adaptations to its lifestyle in the porcine large intestine.</title>
        <authorList>
            <person name="Bellgard M.I."/>
            <person name="Wanchanthuek P."/>
            <person name="La T."/>
            <person name="Ryan K."/>
            <person name="Moolhuijzen P."/>
            <person name="Albertyn Z."/>
            <person name="Shaban B."/>
            <person name="Motro Y."/>
            <person name="Dunn D.S."/>
            <person name="Schibeci D."/>
            <person name="Hunter A."/>
            <person name="Barrero R."/>
            <person name="Phillips N.D."/>
            <person name="Hampson D.J."/>
        </authorList>
    </citation>
    <scope>NUCLEOTIDE SEQUENCE [LARGE SCALE GENOMIC DNA]</scope>
    <source>
        <strain>ATCC 49526 / WA1</strain>
    </source>
</reference>
<keyword id="KW-0131">Cell cycle</keyword>
<keyword id="KW-0132">Cell division</keyword>
<keyword id="KW-0997">Cell inner membrane</keyword>
<keyword id="KW-1003">Cell membrane</keyword>
<keyword id="KW-0133">Cell shape</keyword>
<keyword id="KW-0961">Cell wall biogenesis/degradation</keyword>
<keyword id="KW-0460">Magnesium</keyword>
<keyword id="KW-0472">Membrane</keyword>
<keyword id="KW-0479">Metal-binding</keyword>
<keyword id="KW-0573">Peptidoglycan synthesis</keyword>
<keyword id="KW-0808">Transferase</keyword>
<keyword id="KW-0812">Transmembrane</keyword>
<keyword id="KW-1133">Transmembrane helix</keyword>
<proteinExistence type="inferred from homology"/>
<evidence type="ECO:0000255" key="1">
    <source>
        <dbReference type="HAMAP-Rule" id="MF_00038"/>
    </source>
</evidence>
<protein>
    <recommendedName>
        <fullName evidence="1">Phospho-N-acetylmuramoyl-pentapeptide-transferase</fullName>
        <ecNumber evidence="1">2.7.8.13</ecNumber>
    </recommendedName>
    <alternativeName>
        <fullName evidence="1">UDP-MurNAc-pentapeptide phosphotransferase</fullName>
    </alternativeName>
</protein>
<organism>
    <name type="scientific">Brachyspira hyodysenteriae (strain ATCC 49526 / WA1)</name>
    <dbReference type="NCBI Taxonomy" id="565034"/>
    <lineage>
        <taxon>Bacteria</taxon>
        <taxon>Pseudomonadati</taxon>
        <taxon>Spirochaetota</taxon>
        <taxon>Spirochaetia</taxon>
        <taxon>Brachyspirales</taxon>
        <taxon>Brachyspiraceae</taxon>
        <taxon>Brachyspira</taxon>
    </lineage>
</organism>
<dbReference type="EC" id="2.7.8.13" evidence="1"/>
<dbReference type="EMBL" id="CP001357">
    <property type="protein sequence ID" value="ACN84108.1"/>
    <property type="molecule type" value="Genomic_DNA"/>
</dbReference>
<dbReference type="RefSeq" id="WP_012671150.1">
    <property type="nucleotide sequence ID" value="NC_012225.1"/>
</dbReference>
<dbReference type="SMR" id="C0R1X0"/>
<dbReference type="STRING" id="565034.BHWA1_01638"/>
<dbReference type="GeneID" id="63962735"/>
<dbReference type="KEGG" id="bhy:BHWA1_01638"/>
<dbReference type="eggNOG" id="COG0472">
    <property type="taxonomic scope" value="Bacteria"/>
</dbReference>
<dbReference type="HOGENOM" id="CLU_023982_0_0_12"/>
<dbReference type="UniPathway" id="UPA00219"/>
<dbReference type="Proteomes" id="UP000001803">
    <property type="component" value="Chromosome"/>
</dbReference>
<dbReference type="GO" id="GO:0005886">
    <property type="term" value="C:plasma membrane"/>
    <property type="evidence" value="ECO:0007669"/>
    <property type="project" value="UniProtKB-SubCell"/>
</dbReference>
<dbReference type="GO" id="GO:0046872">
    <property type="term" value="F:metal ion binding"/>
    <property type="evidence" value="ECO:0007669"/>
    <property type="project" value="UniProtKB-KW"/>
</dbReference>
<dbReference type="GO" id="GO:0008963">
    <property type="term" value="F:phospho-N-acetylmuramoyl-pentapeptide-transferase activity"/>
    <property type="evidence" value="ECO:0007669"/>
    <property type="project" value="UniProtKB-UniRule"/>
</dbReference>
<dbReference type="GO" id="GO:0051992">
    <property type="term" value="F:UDP-N-acetylmuramoyl-L-alanyl-D-glutamyl-meso-2,6-diaminopimelyl-D-alanyl-D-alanine:undecaprenyl-phosphate transferase activity"/>
    <property type="evidence" value="ECO:0007669"/>
    <property type="project" value="RHEA"/>
</dbReference>
<dbReference type="GO" id="GO:0051301">
    <property type="term" value="P:cell division"/>
    <property type="evidence" value="ECO:0007669"/>
    <property type="project" value="UniProtKB-KW"/>
</dbReference>
<dbReference type="GO" id="GO:0071555">
    <property type="term" value="P:cell wall organization"/>
    <property type="evidence" value="ECO:0007669"/>
    <property type="project" value="UniProtKB-KW"/>
</dbReference>
<dbReference type="GO" id="GO:0009252">
    <property type="term" value="P:peptidoglycan biosynthetic process"/>
    <property type="evidence" value="ECO:0007669"/>
    <property type="project" value="UniProtKB-UniRule"/>
</dbReference>
<dbReference type="GO" id="GO:0008360">
    <property type="term" value="P:regulation of cell shape"/>
    <property type="evidence" value="ECO:0007669"/>
    <property type="project" value="UniProtKB-KW"/>
</dbReference>
<dbReference type="CDD" id="cd06852">
    <property type="entry name" value="GT_MraY"/>
    <property type="match status" value="1"/>
</dbReference>
<dbReference type="HAMAP" id="MF_00038">
    <property type="entry name" value="MraY"/>
    <property type="match status" value="1"/>
</dbReference>
<dbReference type="InterPro" id="IPR000715">
    <property type="entry name" value="Glycosyl_transferase_4"/>
</dbReference>
<dbReference type="InterPro" id="IPR003524">
    <property type="entry name" value="PNAcMuramoyl-5peptid_Trfase"/>
</dbReference>
<dbReference type="InterPro" id="IPR018480">
    <property type="entry name" value="PNAcMuramoyl-5peptid_Trfase_CS"/>
</dbReference>
<dbReference type="NCBIfam" id="TIGR00445">
    <property type="entry name" value="mraY"/>
    <property type="match status" value="1"/>
</dbReference>
<dbReference type="PANTHER" id="PTHR22926">
    <property type="entry name" value="PHOSPHO-N-ACETYLMURAMOYL-PENTAPEPTIDE-TRANSFERASE"/>
    <property type="match status" value="1"/>
</dbReference>
<dbReference type="PANTHER" id="PTHR22926:SF5">
    <property type="entry name" value="PHOSPHO-N-ACETYLMURAMOYL-PENTAPEPTIDE-TRANSFERASE HOMOLOG"/>
    <property type="match status" value="1"/>
</dbReference>
<dbReference type="Pfam" id="PF00953">
    <property type="entry name" value="Glycos_transf_4"/>
    <property type="match status" value="1"/>
</dbReference>
<dbReference type="Pfam" id="PF10555">
    <property type="entry name" value="MraY_sig1"/>
    <property type="match status" value="1"/>
</dbReference>
<dbReference type="PROSITE" id="PS01347">
    <property type="entry name" value="MRAY_1"/>
    <property type="match status" value="1"/>
</dbReference>
<dbReference type="PROSITE" id="PS01348">
    <property type="entry name" value="MRAY_2"/>
    <property type="match status" value="1"/>
</dbReference>
<accession>C0R1X0</accession>
<name>MRAY_BRAHW</name>
<gene>
    <name evidence="1" type="primary">mraY</name>
    <name type="ordered locus">BHWA1_01638</name>
</gene>